<evidence type="ECO:0000255" key="1">
    <source>
        <dbReference type="HAMAP-Rule" id="MF_04092"/>
    </source>
</evidence>
<evidence type="ECO:0000256" key="2">
    <source>
        <dbReference type="SAM" id="MobiDB-lite"/>
    </source>
</evidence>
<feature type="chain" id="PRO_0000149637" description="Non-structural protein 5">
    <location>
        <begin position="1"/>
        <end position="197"/>
    </location>
</feature>
<feature type="region of interest" description="Disordered" evidence="2">
    <location>
        <begin position="17"/>
        <end position="36"/>
    </location>
</feature>
<feature type="compositionally biased region" description="Low complexity" evidence="2">
    <location>
        <begin position="17"/>
        <end position="30"/>
    </location>
</feature>
<feature type="binding site" evidence="1">
    <location>
        <position position="92"/>
    </location>
    <ligand>
        <name>Mg(2+)</name>
        <dbReference type="ChEBI" id="CHEBI:18420"/>
    </ligand>
</feature>
<feature type="sequence conflict" description="In Ref. 1; CAA24511." ref="1">
    <original>K</original>
    <variation>E</variation>
    <location>
        <position position="82"/>
    </location>
</feature>
<comment type="function">
    <text evidence="1">Plays an essential role in the viral genome replication. Participates, together with NSP2, in the formation of viral factories (viroplasms), which are large inclusions in the host cytoplasm where replication intermediates are assembled and viral RNA replication takes place. Orchestrates the recruitment of viroplasmic proteins such as capsid proteins to these factories. Participates in the selective exclusion of host proteins from stress granules (SG) and P bodies (PB). Also participates in the sequestration of these remodeled organelles in viral factories.</text>
</comment>
<comment type="cofactor">
    <cofactor evidence="1">
        <name>Mg(2+)</name>
        <dbReference type="ChEBI" id="CHEBI:18420"/>
    </cofactor>
</comment>
<comment type="subunit">
    <text evidence="1">Homodimer. Interacts with VP1. Interacts with VP2. Interacts with NSP2; this interaction leads to up-regulation of NSP5 hyperphosphorylation and formation of virus factories. Interacts with NSP6. Participates in the selective exclusion of host proteins from stress granules (SG) and P bodies (PB). Also participates in the sequestration of these remodeled organelles in viral factories.</text>
</comment>
<comment type="subcellular location">
    <subcellularLocation>
        <location evidence="1">Host cytoplasm</location>
    </subcellularLocation>
    <text evidence="1">Found in spherical cytoplasmic structures, called virus factories, that appear early after infection and are the site of viral replication and packaging.</text>
</comment>
<comment type="PTM">
    <text evidence="1">O-glycosylated.</text>
</comment>
<comment type="similarity">
    <text evidence="1">Belongs to the rotavirus NSP5 family.</text>
</comment>
<comment type="sequence caution">
    <conflict type="frameshift">
        <sequence resource="EMBL-CDS" id="CAA24511"/>
    </conflict>
</comment>
<sequence length="197" mass="21670">MSLSIDVTSLPSISSSIFKNESSSTTSTLSGKSIGRNEQYVSSDIEAFNKYMLSKSPEDIGPSDSASNNPLTSFSIRSNAVKTNADAGVSMDSSTQSRPSSNVGCDQMDFSLTKGINVSASLDSCVSISTNHKKEKSKKDKSRKHYPRIEADSDYEDYVLDDSDSDDGKCKNCKYKKKYFALRMRMKQVAMQLIEDL</sequence>
<name>NSP5_ROTHW</name>
<keyword id="KW-0325">Glycoprotein</keyword>
<keyword id="KW-1035">Host cytoplasm</keyword>
<keyword id="KW-0460">Magnesium</keyword>
<keyword id="KW-0479">Metal-binding</keyword>
<keyword id="KW-0547">Nucleotide-binding</keyword>
<keyword id="KW-0694">RNA-binding</keyword>
<accession>P04516</accession>
<accession>Q80IQ6</accession>
<accession>Q993T2</accession>
<organismHost>
    <name type="scientific">Homo sapiens</name>
    <name type="common">Human</name>
    <dbReference type="NCBI Taxonomy" id="9606"/>
</organismHost>
<reference key="1">
    <citation type="journal article" date="1983" name="Proc. Natl. Acad. Sci. U.S.A.">
        <title>Molecular cloning of double-stranded RNA virus genomes.</title>
        <authorList>
            <person name="Imai M."/>
            <person name="Richardson M.A."/>
            <person name="Ikegami N."/>
            <person name="Shatkin A.J."/>
            <person name="Furuichi Y."/>
        </authorList>
    </citation>
    <scope>NUCLEOTIDE SEQUENCE [GENOMIC RNA]</scope>
</reference>
<reference key="2">
    <citation type="journal article" date="2001" name="Virus Genes">
        <title>Nucleotide sequence analysis of rotavirus gene 11 from two tissue culture-adapted ATCC strains, RRV and Wa.</title>
        <authorList>
            <person name="Mohan K.V.K."/>
            <person name="Atreya C.D."/>
        </authorList>
    </citation>
    <scope>NUCLEOTIDE SEQUENCE [GENOMIC RNA]</scope>
</reference>
<reference key="3">
    <citation type="journal article" date="2005" name="J. Med. Virol.">
        <title>Isolation and molecular characterization of a naturally occurring non-structural protein 5 (NSP5) gene reassortant of group A rotavirus of serotype G2P[4] with a long RNA pattern.</title>
        <authorList>
            <person name="Ahmed K."/>
            <person name="Nakagomi T."/>
            <person name="Nakagomi O."/>
        </authorList>
    </citation>
    <scope>NUCLEOTIDE SEQUENCE [GENOMIC RNA] OF 2-197</scope>
</reference>
<dbReference type="EMBL" id="V01191">
    <property type="protein sequence ID" value="CAA24511.1"/>
    <property type="status" value="ALT_FRAME"/>
    <property type="molecule type" value="Genomic_RNA"/>
</dbReference>
<dbReference type="EMBL" id="AF306494">
    <property type="protein sequence ID" value="AAK15269.1"/>
    <property type="molecule type" value="Genomic_RNA"/>
</dbReference>
<dbReference type="EMBL" id="AB091726">
    <property type="protein sequence ID" value="BAC65999.1"/>
    <property type="molecule type" value="Genomic_RNA"/>
</dbReference>
<dbReference type="PIR" id="A04147">
    <property type="entry name" value="VHXREH"/>
</dbReference>
<dbReference type="Proteomes" id="UP000006581">
    <property type="component" value="Genome"/>
</dbReference>
<dbReference type="GO" id="GO:0030430">
    <property type="term" value="C:host cell cytoplasm"/>
    <property type="evidence" value="ECO:0007669"/>
    <property type="project" value="UniProtKB-SubCell"/>
</dbReference>
<dbReference type="GO" id="GO:0016887">
    <property type="term" value="F:ATP hydrolysis activity"/>
    <property type="evidence" value="ECO:0007669"/>
    <property type="project" value="UniProtKB-UniRule"/>
</dbReference>
<dbReference type="GO" id="GO:0000287">
    <property type="term" value="F:magnesium ion binding"/>
    <property type="evidence" value="ECO:0007669"/>
    <property type="project" value="UniProtKB-UniRule"/>
</dbReference>
<dbReference type="GO" id="GO:0000166">
    <property type="term" value="F:nucleotide binding"/>
    <property type="evidence" value="ECO:0007669"/>
    <property type="project" value="UniProtKB-UniRule"/>
</dbReference>
<dbReference type="GO" id="GO:0003723">
    <property type="term" value="F:RNA binding"/>
    <property type="evidence" value="ECO:0007669"/>
    <property type="project" value="UniProtKB-UniRule"/>
</dbReference>
<dbReference type="GO" id="GO:0019079">
    <property type="term" value="P:viral genome replication"/>
    <property type="evidence" value="ECO:0007669"/>
    <property type="project" value="UniProtKB-UniRule"/>
</dbReference>
<dbReference type="HAMAP" id="MF_04092">
    <property type="entry name" value="ROTA_NSP5"/>
    <property type="match status" value="1"/>
</dbReference>
<dbReference type="InterPro" id="IPR002512">
    <property type="entry name" value="Rotavirus_A/C_NSP5"/>
</dbReference>
<dbReference type="Pfam" id="PF01525">
    <property type="entry name" value="Rota_NS26"/>
    <property type="match status" value="2"/>
</dbReference>
<dbReference type="PIRSF" id="PIRSF004006">
    <property type="entry name" value="Rota_NS26"/>
    <property type="match status" value="1"/>
</dbReference>
<protein>
    <recommendedName>
        <fullName evidence="1">Non-structural protein 5</fullName>
        <shortName evidence="1">NSP5</shortName>
    </recommendedName>
    <alternativeName>
        <fullName evidence="1">NS26</fullName>
    </alternativeName>
</protein>
<organism>
    <name type="scientific">Rotavirus A (strain RVA/Human/United States/Wa/1974/G1P1A[8])</name>
    <name type="common">RV-A</name>
    <dbReference type="NCBI Taxonomy" id="10962"/>
    <lineage>
        <taxon>Viruses</taxon>
        <taxon>Riboviria</taxon>
        <taxon>Orthornavirae</taxon>
        <taxon>Duplornaviricota</taxon>
        <taxon>Resentoviricetes</taxon>
        <taxon>Reovirales</taxon>
        <taxon>Sedoreoviridae</taxon>
        <taxon>Rotavirus</taxon>
        <taxon>Rotavirus A</taxon>
    </lineage>
</organism>
<proteinExistence type="inferred from homology"/>